<name>RL36_MESH7</name>
<accession>Q4A8J4</accession>
<protein>
    <recommendedName>
        <fullName evidence="1">Large ribosomal subunit protein bL36</fullName>
    </recommendedName>
    <alternativeName>
        <fullName evidence="2">50S ribosomal protein L36</fullName>
    </alternativeName>
</protein>
<organism>
    <name type="scientific">Mesomycoplasma hyopneumoniae (strain 7448)</name>
    <name type="common">Mycoplasma hyopneumoniae</name>
    <dbReference type="NCBI Taxonomy" id="262722"/>
    <lineage>
        <taxon>Bacteria</taxon>
        <taxon>Bacillati</taxon>
        <taxon>Mycoplasmatota</taxon>
        <taxon>Mycoplasmoidales</taxon>
        <taxon>Metamycoplasmataceae</taxon>
        <taxon>Mesomycoplasma</taxon>
    </lineage>
</organism>
<reference key="1">
    <citation type="journal article" date="2005" name="J. Bacteriol.">
        <title>Swine and poultry pathogens: the complete genome sequences of two strains of Mycoplasma hyopneumoniae and a strain of Mycoplasma synoviae.</title>
        <authorList>
            <person name="Vasconcelos A.T.R."/>
            <person name="Ferreira H.B."/>
            <person name="Bizarro C.V."/>
            <person name="Bonatto S.L."/>
            <person name="Carvalho M.O."/>
            <person name="Pinto P.M."/>
            <person name="Almeida D.F."/>
            <person name="Almeida L.G.P."/>
            <person name="Almeida R."/>
            <person name="Alves-Junior L."/>
            <person name="Assuncao E.N."/>
            <person name="Azevedo V.A.C."/>
            <person name="Bogo M.R."/>
            <person name="Brigido M.M."/>
            <person name="Brocchi M."/>
            <person name="Burity H.A."/>
            <person name="Camargo A.A."/>
            <person name="Camargo S.S."/>
            <person name="Carepo M.S."/>
            <person name="Carraro D.M."/>
            <person name="de Mattos Cascardo J.C."/>
            <person name="Castro L.A."/>
            <person name="Cavalcanti G."/>
            <person name="Chemale G."/>
            <person name="Collevatti R.G."/>
            <person name="Cunha C.W."/>
            <person name="Dallagiovanna B."/>
            <person name="Dambros B.P."/>
            <person name="Dellagostin O.A."/>
            <person name="Falcao C."/>
            <person name="Fantinatti-Garboggini F."/>
            <person name="Felipe M.S.S."/>
            <person name="Fiorentin L."/>
            <person name="Franco G.R."/>
            <person name="Freitas N.S.A."/>
            <person name="Frias D."/>
            <person name="Grangeiro T.B."/>
            <person name="Grisard E.C."/>
            <person name="Guimaraes C.T."/>
            <person name="Hungria M."/>
            <person name="Jardim S.N."/>
            <person name="Krieger M.A."/>
            <person name="Laurino J.P."/>
            <person name="Lima L.F.A."/>
            <person name="Lopes M.I."/>
            <person name="Loreto E.L.S."/>
            <person name="Madeira H.M.F."/>
            <person name="Manfio G.P."/>
            <person name="Maranhao A.Q."/>
            <person name="Martinkovics C.T."/>
            <person name="Medeiros S.R.B."/>
            <person name="Moreira M.A.M."/>
            <person name="Neiva M."/>
            <person name="Ramalho-Neto C.E."/>
            <person name="Nicolas M.F."/>
            <person name="Oliveira S.C."/>
            <person name="Paixao R.F.C."/>
            <person name="Pedrosa F.O."/>
            <person name="Pena S.D.J."/>
            <person name="Pereira M."/>
            <person name="Pereira-Ferrari L."/>
            <person name="Piffer I."/>
            <person name="Pinto L.S."/>
            <person name="Potrich D.P."/>
            <person name="Salim A.C.M."/>
            <person name="Santos F.R."/>
            <person name="Schmitt R."/>
            <person name="Schneider M.P.C."/>
            <person name="Schrank A."/>
            <person name="Schrank I.S."/>
            <person name="Schuck A.F."/>
            <person name="Seuanez H.N."/>
            <person name="Silva D.W."/>
            <person name="Silva R."/>
            <person name="Silva S.C."/>
            <person name="Soares C.M.A."/>
            <person name="Souza K.R.L."/>
            <person name="Souza R.C."/>
            <person name="Staats C.C."/>
            <person name="Steffens M.B.R."/>
            <person name="Teixeira S.M.R."/>
            <person name="Urmenyi T.P."/>
            <person name="Vainstein M.H."/>
            <person name="Zuccherato L.W."/>
            <person name="Simpson A.J.G."/>
            <person name="Zaha A."/>
        </authorList>
    </citation>
    <scope>NUCLEOTIDE SEQUENCE [LARGE SCALE GENOMIC DNA]</scope>
    <source>
        <strain>7448</strain>
    </source>
</reference>
<evidence type="ECO:0000255" key="1">
    <source>
        <dbReference type="HAMAP-Rule" id="MF_00251"/>
    </source>
</evidence>
<evidence type="ECO:0000305" key="2"/>
<gene>
    <name evidence="1" type="primary">rpmJ</name>
    <name type="ordered locus">MHP7448_0171</name>
</gene>
<proteinExistence type="inferred from homology"/>
<sequence>MKVRASIKKICKDCKIIKRRSINRVICLIKKHKQRQG</sequence>
<dbReference type="EMBL" id="AE017244">
    <property type="protein sequence ID" value="AAZ53545.1"/>
    <property type="molecule type" value="Genomic_DNA"/>
</dbReference>
<dbReference type="RefSeq" id="WP_011283963.1">
    <property type="nucleotide sequence ID" value="NC_007332.1"/>
</dbReference>
<dbReference type="SMR" id="Q4A8J4"/>
<dbReference type="GeneID" id="41334470"/>
<dbReference type="KEGG" id="mhp:MHP7448_0171"/>
<dbReference type="HOGENOM" id="CLU_135723_6_2_14"/>
<dbReference type="Proteomes" id="UP000000553">
    <property type="component" value="Chromosome"/>
</dbReference>
<dbReference type="GO" id="GO:0005737">
    <property type="term" value="C:cytoplasm"/>
    <property type="evidence" value="ECO:0007669"/>
    <property type="project" value="UniProtKB-ARBA"/>
</dbReference>
<dbReference type="GO" id="GO:1990904">
    <property type="term" value="C:ribonucleoprotein complex"/>
    <property type="evidence" value="ECO:0007669"/>
    <property type="project" value="UniProtKB-KW"/>
</dbReference>
<dbReference type="GO" id="GO:0005840">
    <property type="term" value="C:ribosome"/>
    <property type="evidence" value="ECO:0007669"/>
    <property type="project" value="UniProtKB-KW"/>
</dbReference>
<dbReference type="GO" id="GO:0003735">
    <property type="term" value="F:structural constituent of ribosome"/>
    <property type="evidence" value="ECO:0007669"/>
    <property type="project" value="InterPro"/>
</dbReference>
<dbReference type="GO" id="GO:0006412">
    <property type="term" value="P:translation"/>
    <property type="evidence" value="ECO:0007669"/>
    <property type="project" value="UniProtKB-UniRule"/>
</dbReference>
<dbReference type="HAMAP" id="MF_00251">
    <property type="entry name" value="Ribosomal_bL36"/>
    <property type="match status" value="1"/>
</dbReference>
<dbReference type="InterPro" id="IPR000473">
    <property type="entry name" value="Ribosomal_bL36"/>
</dbReference>
<dbReference type="InterPro" id="IPR035977">
    <property type="entry name" value="Ribosomal_bL36_sp"/>
</dbReference>
<dbReference type="NCBIfam" id="TIGR01022">
    <property type="entry name" value="rpmJ_bact"/>
    <property type="match status" value="1"/>
</dbReference>
<dbReference type="PANTHER" id="PTHR42888">
    <property type="entry name" value="50S RIBOSOMAL PROTEIN L36, CHLOROPLASTIC"/>
    <property type="match status" value="1"/>
</dbReference>
<dbReference type="PANTHER" id="PTHR42888:SF1">
    <property type="entry name" value="LARGE RIBOSOMAL SUBUNIT PROTEIN BL36C"/>
    <property type="match status" value="1"/>
</dbReference>
<dbReference type="Pfam" id="PF00444">
    <property type="entry name" value="Ribosomal_L36"/>
    <property type="match status" value="1"/>
</dbReference>
<dbReference type="SUPFAM" id="SSF57840">
    <property type="entry name" value="Ribosomal protein L36"/>
    <property type="match status" value="1"/>
</dbReference>
<dbReference type="PROSITE" id="PS00828">
    <property type="entry name" value="RIBOSOMAL_L36"/>
    <property type="match status" value="1"/>
</dbReference>
<comment type="similarity">
    <text evidence="1">Belongs to the bacterial ribosomal protein bL36 family.</text>
</comment>
<keyword id="KW-0687">Ribonucleoprotein</keyword>
<keyword id="KW-0689">Ribosomal protein</keyword>
<feature type="chain" id="PRO_0000344691" description="Large ribosomal subunit protein bL36">
    <location>
        <begin position="1"/>
        <end position="37"/>
    </location>
</feature>